<protein>
    <recommendedName>
        <fullName evidence="1">Chaperone protein HtpG</fullName>
    </recommendedName>
    <alternativeName>
        <fullName evidence="1">Heat shock protein HtpG</fullName>
    </alternativeName>
    <alternativeName>
        <fullName evidence="1">High temperature protein G</fullName>
    </alternativeName>
</protein>
<organism>
    <name type="scientific">Chlorobium chlorochromatii (strain CaD3)</name>
    <dbReference type="NCBI Taxonomy" id="340177"/>
    <lineage>
        <taxon>Bacteria</taxon>
        <taxon>Pseudomonadati</taxon>
        <taxon>Chlorobiota</taxon>
        <taxon>Chlorobiia</taxon>
        <taxon>Chlorobiales</taxon>
        <taxon>Chlorobiaceae</taxon>
        <taxon>Chlorobium/Pelodictyon group</taxon>
        <taxon>Chlorobium</taxon>
    </lineage>
</organism>
<dbReference type="EMBL" id="CP000108">
    <property type="protein sequence ID" value="ABB28333.1"/>
    <property type="molecule type" value="Genomic_DNA"/>
</dbReference>
<dbReference type="SMR" id="Q3ARP2"/>
<dbReference type="STRING" id="340177.Cag_1071"/>
<dbReference type="KEGG" id="cch:Cag_1071"/>
<dbReference type="eggNOG" id="COG0326">
    <property type="taxonomic scope" value="Bacteria"/>
</dbReference>
<dbReference type="HOGENOM" id="CLU_006684_3_0_10"/>
<dbReference type="OrthoDB" id="9802640at2"/>
<dbReference type="GO" id="GO:0005737">
    <property type="term" value="C:cytoplasm"/>
    <property type="evidence" value="ECO:0007669"/>
    <property type="project" value="UniProtKB-SubCell"/>
</dbReference>
<dbReference type="GO" id="GO:0005524">
    <property type="term" value="F:ATP binding"/>
    <property type="evidence" value="ECO:0007669"/>
    <property type="project" value="UniProtKB-UniRule"/>
</dbReference>
<dbReference type="GO" id="GO:0016887">
    <property type="term" value="F:ATP hydrolysis activity"/>
    <property type="evidence" value="ECO:0007669"/>
    <property type="project" value="InterPro"/>
</dbReference>
<dbReference type="GO" id="GO:0140662">
    <property type="term" value="F:ATP-dependent protein folding chaperone"/>
    <property type="evidence" value="ECO:0007669"/>
    <property type="project" value="InterPro"/>
</dbReference>
<dbReference type="GO" id="GO:0051082">
    <property type="term" value="F:unfolded protein binding"/>
    <property type="evidence" value="ECO:0007669"/>
    <property type="project" value="UniProtKB-UniRule"/>
</dbReference>
<dbReference type="CDD" id="cd16927">
    <property type="entry name" value="HATPase_Hsp90-like"/>
    <property type="match status" value="1"/>
</dbReference>
<dbReference type="FunFam" id="3.30.565.10:FF:000009">
    <property type="entry name" value="Molecular chaperone HtpG"/>
    <property type="match status" value="1"/>
</dbReference>
<dbReference type="Gene3D" id="3.30.230.80">
    <property type="match status" value="1"/>
</dbReference>
<dbReference type="Gene3D" id="3.40.50.11260">
    <property type="match status" value="1"/>
</dbReference>
<dbReference type="Gene3D" id="1.20.120.790">
    <property type="entry name" value="Heat shock protein 90, C-terminal domain"/>
    <property type="match status" value="1"/>
</dbReference>
<dbReference type="Gene3D" id="3.30.565.10">
    <property type="entry name" value="Histidine kinase-like ATPase, C-terminal domain"/>
    <property type="match status" value="1"/>
</dbReference>
<dbReference type="HAMAP" id="MF_00505">
    <property type="entry name" value="HSP90"/>
    <property type="match status" value="1"/>
</dbReference>
<dbReference type="InterPro" id="IPR036890">
    <property type="entry name" value="HATPase_C_sf"/>
</dbReference>
<dbReference type="InterPro" id="IPR037196">
    <property type="entry name" value="HSP90_C"/>
</dbReference>
<dbReference type="InterPro" id="IPR001404">
    <property type="entry name" value="Hsp90_fam"/>
</dbReference>
<dbReference type="InterPro" id="IPR020575">
    <property type="entry name" value="Hsp90_N"/>
</dbReference>
<dbReference type="InterPro" id="IPR020568">
    <property type="entry name" value="Ribosomal_Su5_D2-typ_SF"/>
</dbReference>
<dbReference type="NCBIfam" id="NF003555">
    <property type="entry name" value="PRK05218.1"/>
    <property type="match status" value="1"/>
</dbReference>
<dbReference type="PANTHER" id="PTHR11528">
    <property type="entry name" value="HEAT SHOCK PROTEIN 90 FAMILY MEMBER"/>
    <property type="match status" value="1"/>
</dbReference>
<dbReference type="Pfam" id="PF13589">
    <property type="entry name" value="HATPase_c_3"/>
    <property type="match status" value="1"/>
</dbReference>
<dbReference type="Pfam" id="PF00183">
    <property type="entry name" value="HSP90"/>
    <property type="match status" value="1"/>
</dbReference>
<dbReference type="PIRSF" id="PIRSF002583">
    <property type="entry name" value="Hsp90"/>
    <property type="match status" value="1"/>
</dbReference>
<dbReference type="PRINTS" id="PR00775">
    <property type="entry name" value="HEATSHOCK90"/>
</dbReference>
<dbReference type="SMART" id="SM00387">
    <property type="entry name" value="HATPase_c"/>
    <property type="match status" value="1"/>
</dbReference>
<dbReference type="SUPFAM" id="SSF55874">
    <property type="entry name" value="ATPase domain of HSP90 chaperone/DNA topoisomerase II/histidine kinase"/>
    <property type="match status" value="1"/>
</dbReference>
<dbReference type="SUPFAM" id="SSF110942">
    <property type="entry name" value="HSP90 C-terminal domain"/>
    <property type="match status" value="1"/>
</dbReference>
<dbReference type="SUPFAM" id="SSF54211">
    <property type="entry name" value="Ribosomal protein S5 domain 2-like"/>
    <property type="match status" value="1"/>
</dbReference>
<sequence>MSSTENNGTAVPLQEFEYKAEMKQLLDLIIHSLYTHPEIYLRELISNASDALSKARFNALTDQDMLDKDAELAIRLTLNAEEKSVVIEDSGIGMTEEELIANLGTVAKSGTLGFMQSLKEQQQQLDGNLIGQFGVGFYSVFMVTEEVTVETRSFHSNAQGYRWRSSGQGTYTIEQIDKATRGTRISFKLKEEHQEFAEEYRVEQIIKKYSNFVDFPIYLGERQLNSMTALWQRPKSELKDEEVNEFYKFVASDFNDPLDYLSISVEGMVSFKALLFLPKEAPPELMYRQSELENRGPQLYVKKVLIQNECRDLLPEYLRFIAGVVDTEDLSLNVSREMVQSSPVMAKIRQILTGKILGWFEMLAKEQPEKFKTFYKAFGPIIKIGLNTDFTNREKLIELLRFESTKTEEGEFVTLREYVERMGSEQKEIYYHSGNNRAQLLAHPNIEYFREHGIEVLLLSDPVDMFVIPSIHEFDKKPLKSIEKADCDFSQQSSNKAEPVAPNLLNPVLQAFKEALSNEVEDVVESRRLVSSPVTLVSGKDAIDSQLERMMKMMNTPMPPAKRILEVNSSHPIVRNIAGMIMADANNPLIKTVARQLYEGALFLEGSLEDATSYVTRMNELIEAATLTR</sequence>
<proteinExistence type="inferred from homology"/>
<keyword id="KW-0067">ATP-binding</keyword>
<keyword id="KW-0143">Chaperone</keyword>
<keyword id="KW-0963">Cytoplasm</keyword>
<keyword id="KW-0547">Nucleotide-binding</keyword>
<keyword id="KW-0346">Stress response</keyword>
<accession>Q3ARP2</accession>
<comment type="function">
    <text evidence="1">Molecular chaperone. Has ATPase activity.</text>
</comment>
<comment type="subunit">
    <text evidence="1">Homodimer.</text>
</comment>
<comment type="subcellular location">
    <subcellularLocation>
        <location evidence="1">Cytoplasm</location>
    </subcellularLocation>
</comment>
<comment type="similarity">
    <text evidence="1">Belongs to the heat shock protein 90 family.</text>
</comment>
<reference key="1">
    <citation type="submission" date="2005-08" db="EMBL/GenBank/DDBJ databases">
        <title>Complete sequence of Chlorobium chlorochromatii CaD3.</title>
        <authorList>
            <consortium name="US DOE Joint Genome Institute"/>
            <person name="Copeland A."/>
            <person name="Lucas S."/>
            <person name="Lapidus A."/>
            <person name="Barry K."/>
            <person name="Detter J.C."/>
            <person name="Glavina T."/>
            <person name="Hammon N."/>
            <person name="Israni S."/>
            <person name="Pitluck S."/>
            <person name="Bryant D."/>
            <person name="Schmutz J."/>
            <person name="Larimer F."/>
            <person name="Land M."/>
            <person name="Kyrpides N."/>
            <person name="Ivanova N."/>
            <person name="Richardson P."/>
        </authorList>
    </citation>
    <scope>NUCLEOTIDE SEQUENCE [LARGE SCALE GENOMIC DNA]</scope>
    <source>
        <strain>CaD3</strain>
    </source>
</reference>
<name>HTPG_CHLCH</name>
<gene>
    <name evidence="1" type="primary">htpG</name>
    <name type="ordered locus">Cag_1071</name>
</gene>
<evidence type="ECO:0000255" key="1">
    <source>
        <dbReference type="HAMAP-Rule" id="MF_00505"/>
    </source>
</evidence>
<feature type="chain" id="PRO_0000236989" description="Chaperone protein HtpG">
    <location>
        <begin position="1"/>
        <end position="629"/>
    </location>
</feature>
<feature type="region of interest" description="A; substrate-binding" evidence="1">
    <location>
        <begin position="1"/>
        <end position="336"/>
    </location>
</feature>
<feature type="region of interest" description="B" evidence="1">
    <location>
        <begin position="337"/>
        <end position="549"/>
    </location>
</feature>
<feature type="region of interest" description="C" evidence="1">
    <location>
        <begin position="550"/>
        <end position="629"/>
    </location>
</feature>